<comment type="function">
    <text evidence="1">Cell wall formation.</text>
</comment>
<comment type="catalytic activity">
    <reaction evidence="1">
        <text>UDP-N-acetyl-alpha-D-muramate + L-alanine + ATP = UDP-N-acetyl-alpha-D-muramoyl-L-alanine + ADP + phosphate + H(+)</text>
        <dbReference type="Rhea" id="RHEA:23372"/>
        <dbReference type="ChEBI" id="CHEBI:15378"/>
        <dbReference type="ChEBI" id="CHEBI:30616"/>
        <dbReference type="ChEBI" id="CHEBI:43474"/>
        <dbReference type="ChEBI" id="CHEBI:57972"/>
        <dbReference type="ChEBI" id="CHEBI:70757"/>
        <dbReference type="ChEBI" id="CHEBI:83898"/>
        <dbReference type="ChEBI" id="CHEBI:456216"/>
        <dbReference type="EC" id="6.3.2.8"/>
    </reaction>
</comment>
<comment type="pathway">
    <text evidence="1">Cell wall biogenesis; peptidoglycan biosynthesis.</text>
</comment>
<comment type="subcellular location">
    <subcellularLocation>
        <location evidence="1">Cytoplasm</location>
    </subcellularLocation>
</comment>
<comment type="similarity">
    <text evidence="1">Belongs to the MurCDEF family.</text>
</comment>
<comment type="sequence caution" evidence="2">
    <conflict type="erroneous initiation">
        <sequence resource="EMBL-CDS" id="AAW77079"/>
    </conflict>
</comment>
<keyword id="KW-0067">ATP-binding</keyword>
<keyword id="KW-0131">Cell cycle</keyword>
<keyword id="KW-0132">Cell division</keyword>
<keyword id="KW-0133">Cell shape</keyword>
<keyword id="KW-0961">Cell wall biogenesis/degradation</keyword>
<keyword id="KW-0963">Cytoplasm</keyword>
<keyword id="KW-0436">Ligase</keyword>
<keyword id="KW-0547">Nucleotide-binding</keyword>
<keyword id="KW-0573">Peptidoglycan synthesis</keyword>
<keyword id="KW-1185">Reference proteome</keyword>
<feature type="chain" id="PRO_0000242618" description="UDP-N-acetylmuramate--L-alanine ligase">
    <location>
        <begin position="1"/>
        <end position="477"/>
    </location>
</feature>
<feature type="binding site" evidence="1">
    <location>
        <begin position="122"/>
        <end position="128"/>
    </location>
    <ligand>
        <name>ATP</name>
        <dbReference type="ChEBI" id="CHEBI:30616"/>
    </ligand>
</feature>
<gene>
    <name evidence="1" type="primary">murC</name>
    <name type="ordered locus">XOO3825</name>
</gene>
<sequence length="477" mass="50706">MIRRLQDSGDLVRAFPRVHFVGIGGTGMSGIAEVMLTLGYEVSGSDNSDNVATRRLAKLGARVMRGHSAANVLGTDCVVVSSAIRDDNPELMEARSQRIPIMPRAAMLAELMRFRRGIAVAGTHGKTTTTSLAAAVLSEGGLDPTFVIGGQLLAAGANAKLGGGQWLVAEADESDGSFLRLNPLMAVITNIDADHLENYGNDFARIQAAFAEFLQRLPFYGLSLLCIDDPEVAALAGRTPRHVMSYGMSENADVRAEDVVQDGPRMRFTLRLPEGTTTPVTLALPGRHNVLNALAAAAIGWQLGVAPGTIARALENFAGIGRRFNDLGEVTTSTGARVRVVDDYGHHPRELEAVFAAARGGWPDKRLVVAFQPHRYSRTRDQFDAFAAVLSTVDALVLSEVYPAGEAPIPGADSRALARAIRARGRSEPVVVGQIASLAEVLPDVLQDGDLLLMMGAGDIGYVAQHIINNGFVGEPA</sequence>
<evidence type="ECO:0000255" key="1">
    <source>
        <dbReference type="HAMAP-Rule" id="MF_00046"/>
    </source>
</evidence>
<evidence type="ECO:0000305" key="2"/>
<accession>Q5GW42</accession>
<protein>
    <recommendedName>
        <fullName evidence="1">UDP-N-acetylmuramate--L-alanine ligase</fullName>
        <ecNumber evidence="1">6.3.2.8</ecNumber>
    </recommendedName>
    <alternativeName>
        <fullName evidence="1">UDP-N-acetylmuramoyl-L-alanine synthetase</fullName>
    </alternativeName>
</protein>
<name>MURC_XANOR</name>
<proteinExistence type="inferred from homology"/>
<organism>
    <name type="scientific">Xanthomonas oryzae pv. oryzae (strain KACC10331 / KXO85)</name>
    <dbReference type="NCBI Taxonomy" id="291331"/>
    <lineage>
        <taxon>Bacteria</taxon>
        <taxon>Pseudomonadati</taxon>
        <taxon>Pseudomonadota</taxon>
        <taxon>Gammaproteobacteria</taxon>
        <taxon>Lysobacterales</taxon>
        <taxon>Lysobacteraceae</taxon>
        <taxon>Xanthomonas</taxon>
    </lineage>
</organism>
<reference key="1">
    <citation type="journal article" date="2005" name="Nucleic Acids Res.">
        <title>The genome sequence of Xanthomonas oryzae pathovar oryzae KACC10331, the bacterial blight pathogen of rice.</title>
        <authorList>
            <person name="Lee B.-M."/>
            <person name="Park Y.-J."/>
            <person name="Park D.-S."/>
            <person name="Kang H.-W."/>
            <person name="Kim J.-G."/>
            <person name="Song E.-S."/>
            <person name="Park I.-C."/>
            <person name="Yoon U.-H."/>
            <person name="Hahn J.-H."/>
            <person name="Koo B.-S."/>
            <person name="Lee G.-B."/>
            <person name="Kim H."/>
            <person name="Park H.-S."/>
            <person name="Yoon K.-O."/>
            <person name="Kim J.-H."/>
            <person name="Jung C.-H."/>
            <person name="Koh N.-H."/>
            <person name="Seo J.-S."/>
            <person name="Go S.-J."/>
        </authorList>
    </citation>
    <scope>NUCLEOTIDE SEQUENCE [LARGE SCALE GENOMIC DNA]</scope>
    <source>
        <strain>KACC10331 / KXO85</strain>
    </source>
</reference>
<dbReference type="EC" id="6.3.2.8" evidence="1"/>
<dbReference type="EMBL" id="AE013598">
    <property type="protein sequence ID" value="AAW77079.1"/>
    <property type="status" value="ALT_INIT"/>
    <property type="molecule type" value="Genomic_DNA"/>
</dbReference>
<dbReference type="SMR" id="Q5GW42"/>
<dbReference type="STRING" id="291331.XOO3825"/>
<dbReference type="KEGG" id="xoo:XOO3825"/>
<dbReference type="HOGENOM" id="CLU_028104_2_2_6"/>
<dbReference type="UniPathway" id="UPA00219"/>
<dbReference type="Proteomes" id="UP000006735">
    <property type="component" value="Chromosome"/>
</dbReference>
<dbReference type="GO" id="GO:0005737">
    <property type="term" value="C:cytoplasm"/>
    <property type="evidence" value="ECO:0007669"/>
    <property type="project" value="UniProtKB-SubCell"/>
</dbReference>
<dbReference type="GO" id="GO:0005524">
    <property type="term" value="F:ATP binding"/>
    <property type="evidence" value="ECO:0007669"/>
    <property type="project" value="UniProtKB-UniRule"/>
</dbReference>
<dbReference type="GO" id="GO:0008763">
    <property type="term" value="F:UDP-N-acetylmuramate-L-alanine ligase activity"/>
    <property type="evidence" value="ECO:0007669"/>
    <property type="project" value="UniProtKB-UniRule"/>
</dbReference>
<dbReference type="GO" id="GO:0051301">
    <property type="term" value="P:cell division"/>
    <property type="evidence" value="ECO:0007669"/>
    <property type="project" value="UniProtKB-KW"/>
</dbReference>
<dbReference type="GO" id="GO:0071555">
    <property type="term" value="P:cell wall organization"/>
    <property type="evidence" value="ECO:0007669"/>
    <property type="project" value="UniProtKB-KW"/>
</dbReference>
<dbReference type="GO" id="GO:0009252">
    <property type="term" value="P:peptidoglycan biosynthetic process"/>
    <property type="evidence" value="ECO:0007669"/>
    <property type="project" value="UniProtKB-UniRule"/>
</dbReference>
<dbReference type="GO" id="GO:0008360">
    <property type="term" value="P:regulation of cell shape"/>
    <property type="evidence" value="ECO:0007669"/>
    <property type="project" value="UniProtKB-KW"/>
</dbReference>
<dbReference type="Gene3D" id="3.90.190.20">
    <property type="entry name" value="Mur ligase, C-terminal domain"/>
    <property type="match status" value="1"/>
</dbReference>
<dbReference type="Gene3D" id="3.40.1190.10">
    <property type="entry name" value="Mur-like, catalytic domain"/>
    <property type="match status" value="1"/>
</dbReference>
<dbReference type="Gene3D" id="3.40.50.720">
    <property type="entry name" value="NAD(P)-binding Rossmann-like Domain"/>
    <property type="match status" value="1"/>
</dbReference>
<dbReference type="HAMAP" id="MF_00046">
    <property type="entry name" value="MurC"/>
    <property type="match status" value="1"/>
</dbReference>
<dbReference type="InterPro" id="IPR036565">
    <property type="entry name" value="Mur-like_cat_sf"/>
</dbReference>
<dbReference type="InterPro" id="IPR004101">
    <property type="entry name" value="Mur_ligase_C"/>
</dbReference>
<dbReference type="InterPro" id="IPR036615">
    <property type="entry name" value="Mur_ligase_C_dom_sf"/>
</dbReference>
<dbReference type="InterPro" id="IPR013221">
    <property type="entry name" value="Mur_ligase_cen"/>
</dbReference>
<dbReference type="InterPro" id="IPR000713">
    <property type="entry name" value="Mur_ligase_N"/>
</dbReference>
<dbReference type="InterPro" id="IPR050061">
    <property type="entry name" value="MurCDEF_pg_biosynth"/>
</dbReference>
<dbReference type="InterPro" id="IPR005758">
    <property type="entry name" value="UDP-N-AcMur_Ala_ligase_MurC"/>
</dbReference>
<dbReference type="NCBIfam" id="TIGR01082">
    <property type="entry name" value="murC"/>
    <property type="match status" value="1"/>
</dbReference>
<dbReference type="PANTHER" id="PTHR43445:SF3">
    <property type="entry name" value="UDP-N-ACETYLMURAMATE--L-ALANINE LIGASE"/>
    <property type="match status" value="1"/>
</dbReference>
<dbReference type="PANTHER" id="PTHR43445">
    <property type="entry name" value="UDP-N-ACETYLMURAMATE--L-ALANINE LIGASE-RELATED"/>
    <property type="match status" value="1"/>
</dbReference>
<dbReference type="Pfam" id="PF01225">
    <property type="entry name" value="Mur_ligase"/>
    <property type="match status" value="1"/>
</dbReference>
<dbReference type="Pfam" id="PF02875">
    <property type="entry name" value="Mur_ligase_C"/>
    <property type="match status" value="1"/>
</dbReference>
<dbReference type="Pfam" id="PF08245">
    <property type="entry name" value="Mur_ligase_M"/>
    <property type="match status" value="1"/>
</dbReference>
<dbReference type="SUPFAM" id="SSF51984">
    <property type="entry name" value="MurCD N-terminal domain"/>
    <property type="match status" value="1"/>
</dbReference>
<dbReference type="SUPFAM" id="SSF53623">
    <property type="entry name" value="MurD-like peptide ligases, catalytic domain"/>
    <property type="match status" value="1"/>
</dbReference>
<dbReference type="SUPFAM" id="SSF53244">
    <property type="entry name" value="MurD-like peptide ligases, peptide-binding domain"/>
    <property type="match status" value="1"/>
</dbReference>